<proteinExistence type="inferred from homology"/>
<reference key="1">
    <citation type="journal article" date="2004" name="Nucleic Acids Res.">
        <title>The genome sequence of Bacillus cereus ATCC 10987 reveals metabolic adaptations and a large plasmid related to Bacillus anthracis pXO1.</title>
        <authorList>
            <person name="Rasko D.A."/>
            <person name="Ravel J."/>
            <person name="Oekstad O.A."/>
            <person name="Helgason E."/>
            <person name="Cer R.Z."/>
            <person name="Jiang L."/>
            <person name="Shores K.A."/>
            <person name="Fouts D.E."/>
            <person name="Tourasse N.J."/>
            <person name="Angiuoli S.V."/>
            <person name="Kolonay J.F."/>
            <person name="Nelson W.C."/>
            <person name="Kolstoe A.-B."/>
            <person name="Fraser C.M."/>
            <person name="Read T.D."/>
        </authorList>
    </citation>
    <scope>NUCLEOTIDE SEQUENCE [LARGE SCALE GENOMIC DNA]</scope>
    <source>
        <strain>ATCC 10987 / NRS 248</strain>
    </source>
</reference>
<feature type="chain" id="PRO_1000025117" description="Urocanate hydratase">
    <location>
        <begin position="1"/>
        <end position="552"/>
    </location>
</feature>
<feature type="active site" evidence="1">
    <location>
        <position position="407"/>
    </location>
</feature>
<feature type="binding site" evidence="1">
    <location>
        <begin position="49"/>
        <end position="50"/>
    </location>
    <ligand>
        <name>NAD(+)</name>
        <dbReference type="ChEBI" id="CHEBI:57540"/>
    </ligand>
</feature>
<feature type="binding site" evidence="1">
    <location>
        <position position="127"/>
    </location>
    <ligand>
        <name>NAD(+)</name>
        <dbReference type="ChEBI" id="CHEBI:57540"/>
    </ligand>
</feature>
<feature type="binding site" evidence="1">
    <location>
        <begin position="173"/>
        <end position="175"/>
    </location>
    <ligand>
        <name>NAD(+)</name>
        <dbReference type="ChEBI" id="CHEBI:57540"/>
    </ligand>
</feature>
<feature type="binding site" evidence="1">
    <location>
        <position position="193"/>
    </location>
    <ligand>
        <name>NAD(+)</name>
        <dbReference type="ChEBI" id="CHEBI:57540"/>
    </ligand>
</feature>
<feature type="binding site" evidence="1">
    <location>
        <begin position="239"/>
        <end position="240"/>
    </location>
    <ligand>
        <name>NAD(+)</name>
        <dbReference type="ChEBI" id="CHEBI:57540"/>
    </ligand>
</feature>
<feature type="binding site" evidence="1">
    <location>
        <begin position="260"/>
        <end position="264"/>
    </location>
    <ligand>
        <name>NAD(+)</name>
        <dbReference type="ChEBI" id="CHEBI:57540"/>
    </ligand>
</feature>
<feature type="binding site" evidence="1">
    <location>
        <begin position="270"/>
        <end position="271"/>
    </location>
    <ligand>
        <name>NAD(+)</name>
        <dbReference type="ChEBI" id="CHEBI:57540"/>
    </ligand>
</feature>
<feature type="binding site" evidence="1">
    <location>
        <position position="319"/>
    </location>
    <ligand>
        <name>NAD(+)</name>
        <dbReference type="ChEBI" id="CHEBI:57540"/>
    </ligand>
</feature>
<feature type="binding site" evidence="1">
    <location>
        <position position="489"/>
    </location>
    <ligand>
        <name>NAD(+)</name>
        <dbReference type="ChEBI" id="CHEBI:57540"/>
    </ligand>
</feature>
<evidence type="ECO:0000255" key="1">
    <source>
        <dbReference type="HAMAP-Rule" id="MF_00577"/>
    </source>
</evidence>
<dbReference type="EC" id="4.2.1.49" evidence="1"/>
<dbReference type="EMBL" id="AE017194">
    <property type="protein sequence ID" value="AAS42584.1"/>
    <property type="molecule type" value="Genomic_DNA"/>
</dbReference>
<dbReference type="SMR" id="Q733H9"/>
<dbReference type="KEGG" id="bca:BCE_3679"/>
<dbReference type="HOGENOM" id="CLU_018868_0_1_9"/>
<dbReference type="UniPathway" id="UPA00379">
    <property type="reaction ID" value="UER00550"/>
</dbReference>
<dbReference type="Proteomes" id="UP000002527">
    <property type="component" value="Chromosome"/>
</dbReference>
<dbReference type="GO" id="GO:0005737">
    <property type="term" value="C:cytoplasm"/>
    <property type="evidence" value="ECO:0007669"/>
    <property type="project" value="UniProtKB-SubCell"/>
</dbReference>
<dbReference type="GO" id="GO:0016153">
    <property type="term" value="F:urocanate hydratase activity"/>
    <property type="evidence" value="ECO:0007669"/>
    <property type="project" value="UniProtKB-UniRule"/>
</dbReference>
<dbReference type="GO" id="GO:0019556">
    <property type="term" value="P:L-histidine catabolic process to glutamate and formamide"/>
    <property type="evidence" value="ECO:0007669"/>
    <property type="project" value="UniProtKB-UniPathway"/>
</dbReference>
<dbReference type="GO" id="GO:0019557">
    <property type="term" value="P:L-histidine catabolic process to glutamate and formate"/>
    <property type="evidence" value="ECO:0007669"/>
    <property type="project" value="UniProtKB-UniPathway"/>
</dbReference>
<dbReference type="FunFam" id="3.40.50.10730:FF:000001">
    <property type="entry name" value="Urocanate hydratase"/>
    <property type="match status" value="1"/>
</dbReference>
<dbReference type="Gene3D" id="3.40.50.10730">
    <property type="entry name" value="Urocanase like domains"/>
    <property type="match status" value="1"/>
</dbReference>
<dbReference type="Gene3D" id="3.40.1770.10">
    <property type="entry name" value="Urocanase superfamily"/>
    <property type="match status" value="1"/>
</dbReference>
<dbReference type="HAMAP" id="MF_00577">
    <property type="entry name" value="HutU"/>
    <property type="match status" value="1"/>
</dbReference>
<dbReference type="InterPro" id="IPR055351">
    <property type="entry name" value="Urocanase"/>
</dbReference>
<dbReference type="InterPro" id="IPR023637">
    <property type="entry name" value="Urocanase-like"/>
</dbReference>
<dbReference type="InterPro" id="IPR035401">
    <property type="entry name" value="Urocanase_C"/>
</dbReference>
<dbReference type="InterPro" id="IPR038364">
    <property type="entry name" value="Urocanase_central_sf"/>
</dbReference>
<dbReference type="InterPro" id="IPR023636">
    <property type="entry name" value="Urocanase_CS"/>
</dbReference>
<dbReference type="InterPro" id="IPR035400">
    <property type="entry name" value="Urocanase_N"/>
</dbReference>
<dbReference type="InterPro" id="IPR035085">
    <property type="entry name" value="Urocanase_Rossmann-like"/>
</dbReference>
<dbReference type="InterPro" id="IPR036190">
    <property type="entry name" value="Urocanase_sf"/>
</dbReference>
<dbReference type="NCBIfam" id="TIGR01228">
    <property type="entry name" value="hutU"/>
    <property type="match status" value="1"/>
</dbReference>
<dbReference type="NCBIfam" id="NF003820">
    <property type="entry name" value="PRK05414.1"/>
    <property type="match status" value="1"/>
</dbReference>
<dbReference type="PANTHER" id="PTHR12216">
    <property type="entry name" value="UROCANATE HYDRATASE"/>
    <property type="match status" value="1"/>
</dbReference>
<dbReference type="PANTHER" id="PTHR12216:SF4">
    <property type="entry name" value="UROCANATE HYDRATASE"/>
    <property type="match status" value="1"/>
</dbReference>
<dbReference type="Pfam" id="PF01175">
    <property type="entry name" value="Urocanase"/>
    <property type="match status" value="1"/>
</dbReference>
<dbReference type="Pfam" id="PF17392">
    <property type="entry name" value="Urocanase_C"/>
    <property type="match status" value="1"/>
</dbReference>
<dbReference type="Pfam" id="PF17391">
    <property type="entry name" value="Urocanase_N"/>
    <property type="match status" value="1"/>
</dbReference>
<dbReference type="PIRSF" id="PIRSF001423">
    <property type="entry name" value="Urocanate_hydrat"/>
    <property type="match status" value="1"/>
</dbReference>
<dbReference type="SUPFAM" id="SSF111326">
    <property type="entry name" value="Urocanase"/>
    <property type="match status" value="1"/>
</dbReference>
<dbReference type="PROSITE" id="PS01233">
    <property type="entry name" value="UROCANASE"/>
    <property type="match status" value="1"/>
</dbReference>
<keyword id="KW-0963">Cytoplasm</keyword>
<keyword id="KW-0369">Histidine metabolism</keyword>
<keyword id="KW-0456">Lyase</keyword>
<keyword id="KW-0520">NAD</keyword>
<gene>
    <name evidence="1" type="primary">hutU</name>
    <name type="ordered locus">BCE_3679</name>
</gene>
<sequence length="552" mass="60719">MEKVKQTIRAPRGTELQTKGWVQEAALRMLMNNLDPEVAEKPEELVVYGGIGRAARNWESYNAIVDSLKTLESDETLLVQSGKPVAIFKSHEDAPRVLLANSNLVPKWANWNHFRELEKKGLMMYGQMTAGSWIYIGTQGILQGTYETFGEAARQHFGGSLKGTLTLTAGLGGMGGAQPLAVTMNGGVVIAIDVDKRSIDRRIEKRYCDMYTESLEEALTVANEYKEKKEPISIGLLGNAAEILPELVKRNITPDLVTDQTSAHDPLNGYIPVGYTLEEAAKLREEDPERYVQLSKESMTKHVEAMLAMQAKGAITFDYGNNIRQVAFDEGLKNAFDFPGFVPAFIRPLFCEGKGPFRWVALSGDPEDIYKTDEVILREFADNEHLCNWIRMARQQVEFQGLPSRICWLGYGERAKFGRIINEMVANGELSAPIVIGRDHLDCGSVASPNRETEAMKDGSDAVADWPILNALINSVNGASWVSVHHGGGVGMGYSLHAGMVIVADGTEAAAKRIERVLTSDPGMGVVRHVDAGYDLAVETAKEKGVNIPMMK</sequence>
<name>HUTU_BACC1</name>
<comment type="function">
    <text evidence="1">Catalyzes the conversion of urocanate to 4-imidazolone-5-propionate.</text>
</comment>
<comment type="catalytic activity">
    <reaction evidence="1">
        <text>4-imidazolone-5-propanoate = trans-urocanate + H2O</text>
        <dbReference type="Rhea" id="RHEA:13101"/>
        <dbReference type="ChEBI" id="CHEBI:15377"/>
        <dbReference type="ChEBI" id="CHEBI:17771"/>
        <dbReference type="ChEBI" id="CHEBI:77893"/>
        <dbReference type="EC" id="4.2.1.49"/>
    </reaction>
</comment>
<comment type="cofactor">
    <cofactor evidence="1">
        <name>NAD(+)</name>
        <dbReference type="ChEBI" id="CHEBI:57540"/>
    </cofactor>
    <text evidence="1">Binds 1 NAD(+) per subunit.</text>
</comment>
<comment type="pathway">
    <text evidence="1">Amino-acid degradation; L-histidine degradation into L-glutamate; N-formimidoyl-L-glutamate from L-histidine: step 2/3.</text>
</comment>
<comment type="subcellular location">
    <subcellularLocation>
        <location evidence="1">Cytoplasm</location>
    </subcellularLocation>
</comment>
<comment type="similarity">
    <text evidence="1">Belongs to the urocanase family.</text>
</comment>
<organism>
    <name type="scientific">Bacillus cereus (strain ATCC 10987 / NRS 248)</name>
    <dbReference type="NCBI Taxonomy" id="222523"/>
    <lineage>
        <taxon>Bacteria</taxon>
        <taxon>Bacillati</taxon>
        <taxon>Bacillota</taxon>
        <taxon>Bacilli</taxon>
        <taxon>Bacillales</taxon>
        <taxon>Bacillaceae</taxon>
        <taxon>Bacillus</taxon>
        <taxon>Bacillus cereus group</taxon>
    </lineage>
</organism>
<protein>
    <recommendedName>
        <fullName evidence="1">Urocanate hydratase</fullName>
        <shortName evidence="1">Urocanase</shortName>
        <ecNumber evidence="1">4.2.1.49</ecNumber>
    </recommendedName>
    <alternativeName>
        <fullName evidence="1">Imidazolonepropionate hydrolase</fullName>
    </alternativeName>
</protein>
<accession>Q733H9</accession>